<accession>Q931G4</accession>
<protein>
    <recommendedName>
        <fullName evidence="1">GTP 3',8-cyclase</fullName>
        <ecNumber evidence="1">4.1.99.22</ecNumber>
    </recommendedName>
    <alternativeName>
        <fullName evidence="1">Molybdenum cofactor biosynthesis protein A</fullName>
    </alternativeName>
</protein>
<name>MOAA_STAAM</name>
<feature type="chain" id="PRO_0000152991" description="GTP 3',8-cyclase">
    <location>
        <begin position="1"/>
        <end position="340"/>
    </location>
</feature>
<feature type="domain" description="Radical SAM core" evidence="2">
    <location>
        <begin position="8"/>
        <end position="227"/>
    </location>
</feature>
<feature type="binding site" evidence="1">
    <location>
        <position position="17"/>
    </location>
    <ligand>
        <name>GTP</name>
        <dbReference type="ChEBI" id="CHEBI:37565"/>
    </ligand>
</feature>
<feature type="binding site" evidence="1">
    <location>
        <position position="24"/>
    </location>
    <ligand>
        <name>[4Fe-4S] cluster</name>
        <dbReference type="ChEBI" id="CHEBI:49883"/>
        <label>1</label>
        <note>4Fe-4S-S-AdoMet</note>
    </ligand>
</feature>
<feature type="binding site" evidence="1">
    <location>
        <position position="28"/>
    </location>
    <ligand>
        <name>[4Fe-4S] cluster</name>
        <dbReference type="ChEBI" id="CHEBI:49883"/>
        <label>1</label>
        <note>4Fe-4S-S-AdoMet</note>
    </ligand>
</feature>
<feature type="binding site" evidence="1">
    <location>
        <position position="30"/>
    </location>
    <ligand>
        <name>S-adenosyl-L-methionine</name>
        <dbReference type="ChEBI" id="CHEBI:59789"/>
    </ligand>
</feature>
<feature type="binding site" evidence="1">
    <location>
        <position position="31"/>
    </location>
    <ligand>
        <name>[4Fe-4S] cluster</name>
        <dbReference type="ChEBI" id="CHEBI:49883"/>
        <label>1</label>
        <note>4Fe-4S-S-AdoMet</note>
    </ligand>
</feature>
<feature type="binding site" evidence="1">
    <location>
        <position position="71"/>
    </location>
    <ligand>
        <name>GTP</name>
        <dbReference type="ChEBI" id="CHEBI:37565"/>
    </ligand>
</feature>
<feature type="binding site" evidence="1">
    <location>
        <position position="75"/>
    </location>
    <ligand>
        <name>S-adenosyl-L-methionine</name>
        <dbReference type="ChEBI" id="CHEBI:59789"/>
    </ligand>
</feature>
<feature type="binding site" evidence="1">
    <location>
        <position position="102"/>
    </location>
    <ligand>
        <name>GTP</name>
        <dbReference type="ChEBI" id="CHEBI:37565"/>
    </ligand>
</feature>
<feature type="binding site" evidence="1">
    <location>
        <position position="126"/>
    </location>
    <ligand>
        <name>S-adenosyl-L-methionine</name>
        <dbReference type="ChEBI" id="CHEBI:59789"/>
    </ligand>
</feature>
<feature type="binding site" evidence="1">
    <location>
        <position position="163"/>
    </location>
    <ligand>
        <name>GTP</name>
        <dbReference type="ChEBI" id="CHEBI:37565"/>
    </ligand>
</feature>
<feature type="binding site" evidence="1">
    <location>
        <position position="197"/>
    </location>
    <ligand>
        <name>S-adenosyl-L-methionine</name>
        <dbReference type="ChEBI" id="CHEBI:59789"/>
    </ligand>
</feature>
<feature type="binding site" evidence="1">
    <location>
        <position position="261"/>
    </location>
    <ligand>
        <name>[4Fe-4S] cluster</name>
        <dbReference type="ChEBI" id="CHEBI:49883"/>
        <label>2</label>
        <note>4Fe-4S-substrate</note>
    </ligand>
</feature>
<feature type="binding site" evidence="1">
    <location>
        <position position="264"/>
    </location>
    <ligand>
        <name>[4Fe-4S] cluster</name>
        <dbReference type="ChEBI" id="CHEBI:49883"/>
        <label>2</label>
        <note>4Fe-4S-substrate</note>
    </ligand>
</feature>
<feature type="binding site" evidence="1">
    <location>
        <begin position="266"/>
        <end position="268"/>
    </location>
    <ligand>
        <name>GTP</name>
        <dbReference type="ChEBI" id="CHEBI:37565"/>
    </ligand>
</feature>
<feature type="binding site" evidence="1">
    <location>
        <position position="278"/>
    </location>
    <ligand>
        <name>[4Fe-4S] cluster</name>
        <dbReference type="ChEBI" id="CHEBI:49883"/>
        <label>2</label>
        <note>4Fe-4S-substrate</note>
    </ligand>
</feature>
<proteinExistence type="inferred from homology"/>
<evidence type="ECO:0000255" key="1">
    <source>
        <dbReference type="HAMAP-Rule" id="MF_01225"/>
    </source>
</evidence>
<evidence type="ECO:0000255" key="2">
    <source>
        <dbReference type="PROSITE-ProRule" id="PRU01266"/>
    </source>
</evidence>
<sequence>MVEQIKDKLGRPIRDLRLSVTDRCNFRCDYCMPKEVFGDDFVFLPKNELLTFDEMARIAKVYAELGVKKIRITGGEPLMRRDLDVLIAKLNQIDGIEDIGLTTNGLLLKKHGQELYDAGLRRINVSLDAIDDTLFQSINNRNIKATTILEQIDYATSIGLNVKVNVVIQKGINDDQIIPMLEYFKDKHIEIRFIEFMDVGNDNGWDFSKVVTKDEMLTMIEQHFEIDPVEPKYFGEVAKYYRHKDNGVQFGLITSVSQSFCSTCTRARLSSDGKFYGCLFATVDGFNVKAFIRSGVTDEELKEQFKALWQIRDDRYSDERTAQTVANRQRKKINMNYIGG</sequence>
<keyword id="KW-0004">4Fe-4S</keyword>
<keyword id="KW-0342">GTP-binding</keyword>
<keyword id="KW-0408">Iron</keyword>
<keyword id="KW-0411">Iron-sulfur</keyword>
<keyword id="KW-0456">Lyase</keyword>
<keyword id="KW-0479">Metal-binding</keyword>
<keyword id="KW-0501">Molybdenum cofactor biosynthesis</keyword>
<keyword id="KW-0547">Nucleotide-binding</keyword>
<keyword id="KW-0949">S-adenosyl-L-methionine</keyword>
<reference key="1">
    <citation type="journal article" date="2001" name="Lancet">
        <title>Whole genome sequencing of meticillin-resistant Staphylococcus aureus.</title>
        <authorList>
            <person name="Kuroda M."/>
            <person name="Ohta T."/>
            <person name="Uchiyama I."/>
            <person name="Baba T."/>
            <person name="Yuzawa H."/>
            <person name="Kobayashi I."/>
            <person name="Cui L."/>
            <person name="Oguchi A."/>
            <person name="Aoki K."/>
            <person name="Nagai Y."/>
            <person name="Lian J.-Q."/>
            <person name="Ito T."/>
            <person name="Kanamori M."/>
            <person name="Matsumaru H."/>
            <person name="Maruyama A."/>
            <person name="Murakami H."/>
            <person name="Hosoyama A."/>
            <person name="Mizutani-Ui Y."/>
            <person name="Takahashi N.K."/>
            <person name="Sawano T."/>
            <person name="Inoue R."/>
            <person name="Kaito C."/>
            <person name="Sekimizu K."/>
            <person name="Hirakawa H."/>
            <person name="Kuhara S."/>
            <person name="Goto S."/>
            <person name="Yabuzaki J."/>
            <person name="Kanehisa M."/>
            <person name="Yamashita A."/>
            <person name="Oshima K."/>
            <person name="Furuya K."/>
            <person name="Yoshino C."/>
            <person name="Shiba T."/>
            <person name="Hattori M."/>
            <person name="Ogasawara N."/>
            <person name="Hayashi H."/>
            <person name="Hiramatsu K."/>
        </authorList>
    </citation>
    <scope>NUCLEOTIDE SEQUENCE [LARGE SCALE GENOMIC DNA]</scope>
    <source>
        <strain>Mu50 / ATCC 700699</strain>
    </source>
</reference>
<comment type="function">
    <text evidence="1">Catalyzes the cyclization of GTP to (8S)-3',8-cyclo-7,8-dihydroguanosine 5'-triphosphate.</text>
</comment>
<comment type="catalytic activity">
    <reaction evidence="1">
        <text>GTP + AH2 + S-adenosyl-L-methionine = (8S)-3',8-cyclo-7,8-dihydroguanosine 5'-triphosphate + 5'-deoxyadenosine + L-methionine + A + H(+)</text>
        <dbReference type="Rhea" id="RHEA:49576"/>
        <dbReference type="ChEBI" id="CHEBI:13193"/>
        <dbReference type="ChEBI" id="CHEBI:15378"/>
        <dbReference type="ChEBI" id="CHEBI:17319"/>
        <dbReference type="ChEBI" id="CHEBI:17499"/>
        <dbReference type="ChEBI" id="CHEBI:37565"/>
        <dbReference type="ChEBI" id="CHEBI:57844"/>
        <dbReference type="ChEBI" id="CHEBI:59789"/>
        <dbReference type="ChEBI" id="CHEBI:131766"/>
        <dbReference type="EC" id="4.1.99.22"/>
    </reaction>
</comment>
<comment type="cofactor">
    <cofactor evidence="1">
        <name>[4Fe-4S] cluster</name>
        <dbReference type="ChEBI" id="CHEBI:49883"/>
    </cofactor>
    <text evidence="1">Binds 2 [4Fe-4S] clusters. Binds 1 [4Fe-4S] cluster coordinated with 3 cysteines and an exchangeable S-adenosyl-L-methionine and 1 [4Fe-4S] cluster coordinated with 3 cysteines and the GTP-derived substrate.</text>
</comment>
<comment type="pathway">
    <text evidence="1">Cofactor biosynthesis; molybdopterin biosynthesis.</text>
</comment>
<comment type="subunit">
    <text evidence="1">Monomer and homodimer.</text>
</comment>
<comment type="similarity">
    <text evidence="1">Belongs to the radical SAM superfamily. MoaA family.</text>
</comment>
<dbReference type="EC" id="4.1.99.22" evidence="1"/>
<dbReference type="EMBL" id="BA000017">
    <property type="protein sequence ID" value="BAB58430.1"/>
    <property type="molecule type" value="Genomic_DNA"/>
</dbReference>
<dbReference type="RefSeq" id="WP_001838204.1">
    <property type="nucleotide sequence ID" value="NC_002758.2"/>
</dbReference>
<dbReference type="SMR" id="Q931G4"/>
<dbReference type="KEGG" id="sav:SAV2268"/>
<dbReference type="HOGENOM" id="CLU_009273_0_1_9"/>
<dbReference type="PhylomeDB" id="Q931G4"/>
<dbReference type="UniPathway" id="UPA00344"/>
<dbReference type="Proteomes" id="UP000002481">
    <property type="component" value="Chromosome"/>
</dbReference>
<dbReference type="GO" id="GO:0051539">
    <property type="term" value="F:4 iron, 4 sulfur cluster binding"/>
    <property type="evidence" value="ECO:0007669"/>
    <property type="project" value="UniProtKB-UniRule"/>
</dbReference>
<dbReference type="GO" id="GO:0061799">
    <property type="term" value="F:cyclic pyranopterin monophosphate synthase activity"/>
    <property type="evidence" value="ECO:0007669"/>
    <property type="project" value="TreeGrafter"/>
</dbReference>
<dbReference type="GO" id="GO:0061798">
    <property type="term" value="F:GTP 3',8'-cyclase activity"/>
    <property type="evidence" value="ECO:0007669"/>
    <property type="project" value="UniProtKB-UniRule"/>
</dbReference>
<dbReference type="GO" id="GO:0005525">
    <property type="term" value="F:GTP binding"/>
    <property type="evidence" value="ECO:0007669"/>
    <property type="project" value="UniProtKB-UniRule"/>
</dbReference>
<dbReference type="GO" id="GO:0046872">
    <property type="term" value="F:metal ion binding"/>
    <property type="evidence" value="ECO:0007669"/>
    <property type="project" value="UniProtKB-KW"/>
</dbReference>
<dbReference type="GO" id="GO:1904047">
    <property type="term" value="F:S-adenosyl-L-methionine binding"/>
    <property type="evidence" value="ECO:0007669"/>
    <property type="project" value="UniProtKB-UniRule"/>
</dbReference>
<dbReference type="GO" id="GO:0006777">
    <property type="term" value="P:Mo-molybdopterin cofactor biosynthetic process"/>
    <property type="evidence" value="ECO:0007669"/>
    <property type="project" value="UniProtKB-UniRule"/>
</dbReference>
<dbReference type="CDD" id="cd01335">
    <property type="entry name" value="Radical_SAM"/>
    <property type="match status" value="1"/>
</dbReference>
<dbReference type="CDD" id="cd21117">
    <property type="entry name" value="Twitch_MoaA"/>
    <property type="match status" value="1"/>
</dbReference>
<dbReference type="Gene3D" id="3.20.20.70">
    <property type="entry name" value="Aldolase class I"/>
    <property type="match status" value="1"/>
</dbReference>
<dbReference type="HAMAP" id="MF_01225_B">
    <property type="entry name" value="MoaA_B"/>
    <property type="match status" value="1"/>
</dbReference>
<dbReference type="InterPro" id="IPR013785">
    <property type="entry name" value="Aldolase_TIM"/>
</dbReference>
<dbReference type="InterPro" id="IPR006638">
    <property type="entry name" value="Elp3/MiaA/NifB-like_rSAM"/>
</dbReference>
<dbReference type="InterPro" id="IPR013483">
    <property type="entry name" value="MoaA"/>
</dbReference>
<dbReference type="InterPro" id="IPR000385">
    <property type="entry name" value="MoaA_NifB_PqqE_Fe-S-bd_CS"/>
</dbReference>
<dbReference type="InterPro" id="IPR010505">
    <property type="entry name" value="MoaA_twitch"/>
</dbReference>
<dbReference type="InterPro" id="IPR050105">
    <property type="entry name" value="MoCo_biosynth_MoaA/MoaC"/>
</dbReference>
<dbReference type="InterPro" id="IPR007197">
    <property type="entry name" value="rSAM"/>
</dbReference>
<dbReference type="NCBIfam" id="TIGR02666">
    <property type="entry name" value="moaA"/>
    <property type="match status" value="1"/>
</dbReference>
<dbReference type="PANTHER" id="PTHR22960:SF0">
    <property type="entry name" value="MOLYBDENUM COFACTOR BIOSYNTHESIS PROTEIN 1"/>
    <property type="match status" value="1"/>
</dbReference>
<dbReference type="PANTHER" id="PTHR22960">
    <property type="entry name" value="MOLYBDOPTERIN COFACTOR SYNTHESIS PROTEIN A"/>
    <property type="match status" value="1"/>
</dbReference>
<dbReference type="Pfam" id="PF06463">
    <property type="entry name" value="Mob_synth_C"/>
    <property type="match status" value="1"/>
</dbReference>
<dbReference type="Pfam" id="PF04055">
    <property type="entry name" value="Radical_SAM"/>
    <property type="match status" value="1"/>
</dbReference>
<dbReference type="SFLD" id="SFLDF00276">
    <property type="entry name" value="cyclic_pyranopterin_phosphate"/>
    <property type="match status" value="1"/>
</dbReference>
<dbReference type="SFLD" id="SFLDG01072">
    <property type="entry name" value="dehydrogenase_like"/>
    <property type="match status" value="1"/>
</dbReference>
<dbReference type="SMART" id="SM00729">
    <property type="entry name" value="Elp3"/>
    <property type="match status" value="1"/>
</dbReference>
<dbReference type="SUPFAM" id="SSF102114">
    <property type="entry name" value="Radical SAM enzymes"/>
    <property type="match status" value="1"/>
</dbReference>
<dbReference type="PROSITE" id="PS01305">
    <property type="entry name" value="MOAA_NIFB_PQQE"/>
    <property type="match status" value="1"/>
</dbReference>
<dbReference type="PROSITE" id="PS51918">
    <property type="entry name" value="RADICAL_SAM"/>
    <property type="match status" value="1"/>
</dbReference>
<gene>
    <name evidence="1" type="primary">moaA</name>
    <name type="ordered locus">SAV2268</name>
</gene>
<organism>
    <name type="scientific">Staphylococcus aureus (strain Mu50 / ATCC 700699)</name>
    <dbReference type="NCBI Taxonomy" id="158878"/>
    <lineage>
        <taxon>Bacteria</taxon>
        <taxon>Bacillati</taxon>
        <taxon>Bacillota</taxon>
        <taxon>Bacilli</taxon>
        <taxon>Bacillales</taxon>
        <taxon>Staphylococcaceae</taxon>
        <taxon>Staphylococcus</taxon>
    </lineage>
</organism>